<dbReference type="EC" id="6.1.1.1" evidence="1"/>
<dbReference type="EMBL" id="CP000383">
    <property type="protein sequence ID" value="ABG58807.1"/>
    <property type="molecule type" value="Genomic_DNA"/>
</dbReference>
<dbReference type="RefSeq" id="WP_011584922.1">
    <property type="nucleotide sequence ID" value="NC_008255.1"/>
</dbReference>
<dbReference type="SMR" id="Q11UV9"/>
<dbReference type="STRING" id="269798.CHU_1536"/>
<dbReference type="KEGG" id="chu:CHU_1536"/>
<dbReference type="eggNOG" id="COG0162">
    <property type="taxonomic scope" value="Bacteria"/>
</dbReference>
<dbReference type="HOGENOM" id="CLU_024003_0_3_10"/>
<dbReference type="OrthoDB" id="9804243at2"/>
<dbReference type="Proteomes" id="UP000001822">
    <property type="component" value="Chromosome"/>
</dbReference>
<dbReference type="GO" id="GO:0005829">
    <property type="term" value="C:cytosol"/>
    <property type="evidence" value="ECO:0007669"/>
    <property type="project" value="TreeGrafter"/>
</dbReference>
<dbReference type="GO" id="GO:0005524">
    <property type="term" value="F:ATP binding"/>
    <property type="evidence" value="ECO:0007669"/>
    <property type="project" value="UniProtKB-UniRule"/>
</dbReference>
<dbReference type="GO" id="GO:0003723">
    <property type="term" value="F:RNA binding"/>
    <property type="evidence" value="ECO:0007669"/>
    <property type="project" value="UniProtKB-KW"/>
</dbReference>
<dbReference type="GO" id="GO:0004831">
    <property type="term" value="F:tyrosine-tRNA ligase activity"/>
    <property type="evidence" value="ECO:0007669"/>
    <property type="project" value="UniProtKB-UniRule"/>
</dbReference>
<dbReference type="GO" id="GO:0006437">
    <property type="term" value="P:tyrosyl-tRNA aminoacylation"/>
    <property type="evidence" value="ECO:0007669"/>
    <property type="project" value="UniProtKB-UniRule"/>
</dbReference>
<dbReference type="CDD" id="cd00165">
    <property type="entry name" value="S4"/>
    <property type="match status" value="1"/>
</dbReference>
<dbReference type="CDD" id="cd00805">
    <property type="entry name" value="TyrRS_core"/>
    <property type="match status" value="1"/>
</dbReference>
<dbReference type="FunFam" id="1.10.240.10:FF:000001">
    <property type="entry name" value="Tyrosine--tRNA ligase"/>
    <property type="match status" value="1"/>
</dbReference>
<dbReference type="FunFam" id="3.40.50.620:FF:000008">
    <property type="entry name" value="Tyrosine--tRNA ligase"/>
    <property type="match status" value="1"/>
</dbReference>
<dbReference type="Gene3D" id="3.40.50.620">
    <property type="entry name" value="HUPs"/>
    <property type="match status" value="1"/>
</dbReference>
<dbReference type="Gene3D" id="3.10.290.10">
    <property type="entry name" value="RNA-binding S4 domain"/>
    <property type="match status" value="1"/>
</dbReference>
<dbReference type="Gene3D" id="1.10.240.10">
    <property type="entry name" value="Tyrosyl-Transfer RNA Synthetase"/>
    <property type="match status" value="1"/>
</dbReference>
<dbReference type="HAMAP" id="MF_02006">
    <property type="entry name" value="Tyr_tRNA_synth_type1"/>
    <property type="match status" value="1"/>
</dbReference>
<dbReference type="InterPro" id="IPR002305">
    <property type="entry name" value="aa-tRNA-synth_Ic"/>
</dbReference>
<dbReference type="InterPro" id="IPR014729">
    <property type="entry name" value="Rossmann-like_a/b/a_fold"/>
</dbReference>
<dbReference type="InterPro" id="IPR036986">
    <property type="entry name" value="S4_RNA-bd_sf"/>
</dbReference>
<dbReference type="InterPro" id="IPR054608">
    <property type="entry name" value="SYY-like_C"/>
</dbReference>
<dbReference type="InterPro" id="IPR002307">
    <property type="entry name" value="Tyr-tRNA-ligase"/>
</dbReference>
<dbReference type="InterPro" id="IPR024088">
    <property type="entry name" value="Tyr-tRNA-ligase_bac-type"/>
</dbReference>
<dbReference type="InterPro" id="IPR024107">
    <property type="entry name" value="Tyr-tRNA-ligase_bac_1"/>
</dbReference>
<dbReference type="NCBIfam" id="TIGR00234">
    <property type="entry name" value="tyrS"/>
    <property type="match status" value="1"/>
</dbReference>
<dbReference type="PANTHER" id="PTHR11766:SF0">
    <property type="entry name" value="TYROSINE--TRNA LIGASE, MITOCHONDRIAL"/>
    <property type="match status" value="1"/>
</dbReference>
<dbReference type="PANTHER" id="PTHR11766">
    <property type="entry name" value="TYROSYL-TRNA SYNTHETASE"/>
    <property type="match status" value="1"/>
</dbReference>
<dbReference type="Pfam" id="PF22421">
    <property type="entry name" value="SYY_C-terminal"/>
    <property type="match status" value="1"/>
</dbReference>
<dbReference type="Pfam" id="PF00579">
    <property type="entry name" value="tRNA-synt_1b"/>
    <property type="match status" value="1"/>
</dbReference>
<dbReference type="PRINTS" id="PR01040">
    <property type="entry name" value="TRNASYNTHTYR"/>
</dbReference>
<dbReference type="SUPFAM" id="SSF55174">
    <property type="entry name" value="Alpha-L RNA-binding motif"/>
    <property type="match status" value="1"/>
</dbReference>
<dbReference type="SUPFAM" id="SSF52374">
    <property type="entry name" value="Nucleotidylyl transferase"/>
    <property type="match status" value="1"/>
</dbReference>
<dbReference type="PROSITE" id="PS50889">
    <property type="entry name" value="S4"/>
    <property type="match status" value="1"/>
</dbReference>
<comment type="function">
    <text evidence="1">Catalyzes the attachment of tyrosine to tRNA(Tyr) in a two-step reaction: tyrosine is first activated by ATP to form Tyr-AMP and then transferred to the acceptor end of tRNA(Tyr).</text>
</comment>
<comment type="catalytic activity">
    <reaction evidence="1">
        <text>tRNA(Tyr) + L-tyrosine + ATP = L-tyrosyl-tRNA(Tyr) + AMP + diphosphate + H(+)</text>
        <dbReference type="Rhea" id="RHEA:10220"/>
        <dbReference type="Rhea" id="RHEA-COMP:9706"/>
        <dbReference type="Rhea" id="RHEA-COMP:9707"/>
        <dbReference type="ChEBI" id="CHEBI:15378"/>
        <dbReference type="ChEBI" id="CHEBI:30616"/>
        <dbReference type="ChEBI" id="CHEBI:33019"/>
        <dbReference type="ChEBI" id="CHEBI:58315"/>
        <dbReference type="ChEBI" id="CHEBI:78442"/>
        <dbReference type="ChEBI" id="CHEBI:78536"/>
        <dbReference type="ChEBI" id="CHEBI:456215"/>
        <dbReference type="EC" id="6.1.1.1"/>
    </reaction>
</comment>
<comment type="subunit">
    <text evidence="1">Homodimer.</text>
</comment>
<comment type="subcellular location">
    <subcellularLocation>
        <location evidence="1">Cytoplasm</location>
    </subcellularLocation>
</comment>
<comment type="similarity">
    <text evidence="1">Belongs to the class-I aminoacyl-tRNA synthetase family. TyrS type 1 subfamily.</text>
</comment>
<gene>
    <name evidence="1" type="primary">tyrS</name>
    <name type="ordered locus">CHU_1536</name>
</gene>
<reference key="1">
    <citation type="journal article" date="2007" name="Appl. Environ. Microbiol.">
        <title>Genome sequence of the cellulolytic gliding bacterium Cytophaga hutchinsonii.</title>
        <authorList>
            <person name="Xie G."/>
            <person name="Bruce D.C."/>
            <person name="Challacombe J.F."/>
            <person name="Chertkov O."/>
            <person name="Detter J.C."/>
            <person name="Gilna P."/>
            <person name="Han C.S."/>
            <person name="Lucas S."/>
            <person name="Misra M."/>
            <person name="Myers G.L."/>
            <person name="Richardson P."/>
            <person name="Tapia R."/>
            <person name="Thayer N."/>
            <person name="Thompson L.S."/>
            <person name="Brettin T.S."/>
            <person name="Henrissat B."/>
            <person name="Wilson D.B."/>
            <person name="McBride M.J."/>
        </authorList>
    </citation>
    <scope>NUCLEOTIDE SEQUENCE [LARGE SCALE GENOMIC DNA]</scope>
    <source>
        <strain>ATCC 33406 / DSM 1761 / JCM 20678 / CIP 103989 / IAM 12607 / NBRC 15051 / NCIMB 9469 / D465</strain>
    </source>
</reference>
<sequence>MKNFVEELKWRGMLHDIMPGTEEYLLKNQTTAYVGFDPTASSLTIGNLVTIMMLVHFQHAGHIPMALVGGATGMIGDPSGRSEERNFLSEETLRLNQEGIRKQLTKFLDFDCGANSAKLVNNYDWFKGIGFLEFLRDAGKHLTVNYMMAKDSVKKRLEVGLTFTEFSYQLLQGYDFCHLYQKENVRLQMGGSDQWGNITSGTELIRRMADGTAFALTTPLLTKADGTKFGKSAGGNIWLDAALTSPYKFYQFWLNSADEDVSRFIRIFTLLSKEAIEALEAEHAKAPHERLLQKTLAKDITIRVHSEEDYEMAIKASEILFGKSVTEDLQALNESTLLSVFEGIPLIEISRSILDEKPSVLDLLSTLTNSEVFPSKGEARKMIQGGGVSINKIKINSSEEIVNYPLLLNNYLLVQKGKKNYYLLRFN</sequence>
<accession>Q11UV9</accession>
<feature type="chain" id="PRO_1000216269" description="Tyrosine--tRNA ligase">
    <location>
        <begin position="1"/>
        <end position="427"/>
    </location>
</feature>
<feature type="domain" description="S4 RNA-binding" evidence="1">
    <location>
        <begin position="361"/>
        <end position="427"/>
    </location>
</feature>
<feature type="short sequence motif" description="'HIGH' region">
    <location>
        <begin position="38"/>
        <end position="47"/>
    </location>
</feature>
<feature type="short sequence motif" description="'KMSKS' region">
    <location>
        <begin position="228"/>
        <end position="232"/>
    </location>
</feature>
<feature type="binding site" evidence="1">
    <location>
        <position position="33"/>
    </location>
    <ligand>
        <name>L-tyrosine</name>
        <dbReference type="ChEBI" id="CHEBI:58315"/>
    </ligand>
</feature>
<feature type="binding site" evidence="1">
    <location>
        <position position="168"/>
    </location>
    <ligand>
        <name>L-tyrosine</name>
        <dbReference type="ChEBI" id="CHEBI:58315"/>
    </ligand>
</feature>
<feature type="binding site" evidence="1">
    <location>
        <position position="172"/>
    </location>
    <ligand>
        <name>L-tyrosine</name>
        <dbReference type="ChEBI" id="CHEBI:58315"/>
    </ligand>
</feature>
<feature type="binding site" evidence="1">
    <location>
        <position position="231"/>
    </location>
    <ligand>
        <name>ATP</name>
        <dbReference type="ChEBI" id="CHEBI:30616"/>
    </ligand>
</feature>
<organism>
    <name type="scientific">Cytophaga hutchinsonii (strain ATCC 33406 / DSM 1761 / CIP 103989 / NBRC 15051 / NCIMB 9469 / D465)</name>
    <dbReference type="NCBI Taxonomy" id="269798"/>
    <lineage>
        <taxon>Bacteria</taxon>
        <taxon>Pseudomonadati</taxon>
        <taxon>Bacteroidota</taxon>
        <taxon>Cytophagia</taxon>
        <taxon>Cytophagales</taxon>
        <taxon>Cytophagaceae</taxon>
        <taxon>Cytophaga</taxon>
    </lineage>
</organism>
<protein>
    <recommendedName>
        <fullName evidence="1">Tyrosine--tRNA ligase</fullName>
        <ecNumber evidence="1">6.1.1.1</ecNumber>
    </recommendedName>
    <alternativeName>
        <fullName evidence="1">Tyrosyl-tRNA synthetase</fullName>
        <shortName evidence="1">TyrRS</shortName>
    </alternativeName>
</protein>
<proteinExistence type="inferred from homology"/>
<evidence type="ECO:0000255" key="1">
    <source>
        <dbReference type="HAMAP-Rule" id="MF_02006"/>
    </source>
</evidence>
<keyword id="KW-0030">Aminoacyl-tRNA synthetase</keyword>
<keyword id="KW-0067">ATP-binding</keyword>
<keyword id="KW-0963">Cytoplasm</keyword>
<keyword id="KW-0436">Ligase</keyword>
<keyword id="KW-0547">Nucleotide-binding</keyword>
<keyword id="KW-0648">Protein biosynthesis</keyword>
<keyword id="KW-1185">Reference proteome</keyword>
<keyword id="KW-0694">RNA-binding</keyword>
<name>SYY_CYTH3</name>